<protein>
    <recommendedName>
        <fullName evidence="1">Large ribosomal subunit protein bL12</fullName>
    </recommendedName>
    <alternativeName>
        <fullName evidence="2">50S ribosomal protein L7/L12</fullName>
    </alternativeName>
</protein>
<feature type="chain" id="PRO_0000243458" description="Large ribosomal subunit protein bL12">
    <location>
        <begin position="1"/>
        <end position="129"/>
    </location>
</feature>
<name>RL7_PARUW</name>
<accession>Q6MDM2</accession>
<evidence type="ECO:0000255" key="1">
    <source>
        <dbReference type="HAMAP-Rule" id="MF_00368"/>
    </source>
</evidence>
<evidence type="ECO:0000305" key="2"/>
<sequence length="129" mass="13457">MSKKKTEELVDALSELTVLEMAELKTLLEDKWGVKAAAPVAVAAPAAGAPAAAVVESTDFQVTLTEAPADKKIGIIKVVREITGLGLKEAKDLVEAAPKELKPTAPKAEAEDIKKKIETAGGKVTLKGL</sequence>
<dbReference type="EMBL" id="BX908798">
    <property type="protein sequence ID" value="CAF23327.1"/>
    <property type="molecule type" value="Genomic_DNA"/>
</dbReference>
<dbReference type="RefSeq" id="WP_011175153.1">
    <property type="nucleotide sequence ID" value="NC_005861.2"/>
</dbReference>
<dbReference type="SMR" id="Q6MDM2"/>
<dbReference type="STRING" id="264201.pc0603"/>
<dbReference type="KEGG" id="pcu:PC_RS02890"/>
<dbReference type="eggNOG" id="COG0222">
    <property type="taxonomic scope" value="Bacteria"/>
</dbReference>
<dbReference type="HOGENOM" id="CLU_086499_3_0_0"/>
<dbReference type="OrthoDB" id="9811748at2"/>
<dbReference type="Proteomes" id="UP000000529">
    <property type="component" value="Chromosome"/>
</dbReference>
<dbReference type="GO" id="GO:0005737">
    <property type="term" value="C:cytoplasm"/>
    <property type="evidence" value="ECO:0007669"/>
    <property type="project" value="UniProtKB-ARBA"/>
</dbReference>
<dbReference type="GO" id="GO:1990904">
    <property type="term" value="C:ribonucleoprotein complex"/>
    <property type="evidence" value="ECO:0007669"/>
    <property type="project" value="UniProtKB-KW"/>
</dbReference>
<dbReference type="GO" id="GO:0005840">
    <property type="term" value="C:ribosome"/>
    <property type="evidence" value="ECO:0007669"/>
    <property type="project" value="UniProtKB-KW"/>
</dbReference>
<dbReference type="GO" id="GO:0003729">
    <property type="term" value="F:mRNA binding"/>
    <property type="evidence" value="ECO:0007669"/>
    <property type="project" value="TreeGrafter"/>
</dbReference>
<dbReference type="GO" id="GO:0003735">
    <property type="term" value="F:structural constituent of ribosome"/>
    <property type="evidence" value="ECO:0007669"/>
    <property type="project" value="InterPro"/>
</dbReference>
<dbReference type="GO" id="GO:0006412">
    <property type="term" value="P:translation"/>
    <property type="evidence" value="ECO:0007669"/>
    <property type="project" value="UniProtKB-UniRule"/>
</dbReference>
<dbReference type="CDD" id="cd00387">
    <property type="entry name" value="Ribosomal_L7_L12"/>
    <property type="match status" value="1"/>
</dbReference>
<dbReference type="FunFam" id="3.30.1390.10:FF:000001">
    <property type="entry name" value="50S ribosomal protein L7/L12"/>
    <property type="match status" value="1"/>
</dbReference>
<dbReference type="Gene3D" id="3.30.1390.10">
    <property type="match status" value="1"/>
</dbReference>
<dbReference type="Gene3D" id="1.20.5.710">
    <property type="entry name" value="Single helix bin"/>
    <property type="match status" value="1"/>
</dbReference>
<dbReference type="HAMAP" id="MF_00368">
    <property type="entry name" value="Ribosomal_bL12"/>
    <property type="match status" value="1"/>
</dbReference>
<dbReference type="InterPro" id="IPR000206">
    <property type="entry name" value="Ribosomal_bL12"/>
</dbReference>
<dbReference type="InterPro" id="IPR013823">
    <property type="entry name" value="Ribosomal_bL12_C"/>
</dbReference>
<dbReference type="InterPro" id="IPR014719">
    <property type="entry name" value="Ribosomal_bL12_C/ClpS-like"/>
</dbReference>
<dbReference type="InterPro" id="IPR008932">
    <property type="entry name" value="Ribosomal_bL12_oligo"/>
</dbReference>
<dbReference type="InterPro" id="IPR036235">
    <property type="entry name" value="Ribosomal_bL12_oligo_N_sf"/>
</dbReference>
<dbReference type="NCBIfam" id="TIGR00855">
    <property type="entry name" value="L12"/>
    <property type="match status" value="1"/>
</dbReference>
<dbReference type="PANTHER" id="PTHR45987">
    <property type="entry name" value="39S RIBOSOMAL PROTEIN L12"/>
    <property type="match status" value="1"/>
</dbReference>
<dbReference type="PANTHER" id="PTHR45987:SF4">
    <property type="entry name" value="LARGE RIBOSOMAL SUBUNIT PROTEIN BL12M"/>
    <property type="match status" value="1"/>
</dbReference>
<dbReference type="Pfam" id="PF00542">
    <property type="entry name" value="Ribosomal_L12"/>
    <property type="match status" value="1"/>
</dbReference>
<dbReference type="Pfam" id="PF16320">
    <property type="entry name" value="Ribosomal_L12_N"/>
    <property type="match status" value="1"/>
</dbReference>
<dbReference type="SUPFAM" id="SSF54736">
    <property type="entry name" value="ClpS-like"/>
    <property type="match status" value="1"/>
</dbReference>
<dbReference type="SUPFAM" id="SSF48300">
    <property type="entry name" value="Ribosomal protein L7/12, oligomerisation (N-terminal) domain"/>
    <property type="match status" value="1"/>
</dbReference>
<proteinExistence type="inferred from homology"/>
<keyword id="KW-1185">Reference proteome</keyword>
<keyword id="KW-0687">Ribonucleoprotein</keyword>
<keyword id="KW-0689">Ribosomal protein</keyword>
<comment type="function">
    <text evidence="1">Forms part of the ribosomal stalk which helps the ribosome interact with GTP-bound translation factors. Is thus essential for accurate translation.</text>
</comment>
<comment type="subunit">
    <text evidence="1">Homodimer. Part of the ribosomal stalk of the 50S ribosomal subunit. Forms a multimeric L10(L12)X complex, where L10 forms an elongated spine to which 2 to 4 L12 dimers bind in a sequential fashion. Binds GTP-bound translation factors.</text>
</comment>
<comment type="similarity">
    <text evidence="1">Belongs to the bacterial ribosomal protein bL12 family.</text>
</comment>
<organism>
    <name type="scientific">Protochlamydia amoebophila (strain UWE25)</name>
    <dbReference type="NCBI Taxonomy" id="264201"/>
    <lineage>
        <taxon>Bacteria</taxon>
        <taxon>Pseudomonadati</taxon>
        <taxon>Chlamydiota</taxon>
        <taxon>Chlamydiia</taxon>
        <taxon>Parachlamydiales</taxon>
        <taxon>Parachlamydiaceae</taxon>
        <taxon>Candidatus Protochlamydia</taxon>
    </lineage>
</organism>
<reference key="1">
    <citation type="journal article" date="2004" name="Science">
        <title>Illuminating the evolutionary history of chlamydiae.</title>
        <authorList>
            <person name="Horn M."/>
            <person name="Collingro A."/>
            <person name="Schmitz-Esser S."/>
            <person name="Beier C.L."/>
            <person name="Purkhold U."/>
            <person name="Fartmann B."/>
            <person name="Brandt P."/>
            <person name="Nyakatura G.J."/>
            <person name="Droege M."/>
            <person name="Frishman D."/>
            <person name="Rattei T."/>
            <person name="Mewes H.-W."/>
            <person name="Wagner M."/>
        </authorList>
    </citation>
    <scope>NUCLEOTIDE SEQUENCE [LARGE SCALE GENOMIC DNA]</scope>
    <source>
        <strain>UWE25</strain>
    </source>
</reference>
<gene>
    <name evidence="1" type="primary">rplL</name>
    <name type="ordered locus">pc0603</name>
</gene>